<proteinExistence type="evidence at protein level"/>
<accession>Q00924</accession>
<dbReference type="EC" id="5.1.99.5" evidence="2 3"/>
<dbReference type="EMBL" id="M84731">
    <property type="protein sequence ID" value="AAA25843.1"/>
    <property type="molecule type" value="Genomic_DNA"/>
</dbReference>
<dbReference type="PIR" id="B41895">
    <property type="entry name" value="B41895"/>
</dbReference>
<dbReference type="SMR" id="Q00924"/>
<dbReference type="BioCyc" id="MetaCyc:MONOMER-14268"/>
<dbReference type="BRENDA" id="5.1.99.5">
    <property type="organism ID" value="5085"/>
</dbReference>
<dbReference type="GO" id="GO:0047661">
    <property type="term" value="F:amino-acid racemase activity"/>
    <property type="evidence" value="ECO:0007669"/>
    <property type="project" value="InterPro"/>
</dbReference>
<dbReference type="GO" id="GO:0036348">
    <property type="term" value="F:hydantoin racemase activity"/>
    <property type="evidence" value="ECO:0000314"/>
    <property type="project" value="UniProtKB"/>
</dbReference>
<dbReference type="GO" id="GO:0008652">
    <property type="term" value="P:amino acid biosynthetic process"/>
    <property type="evidence" value="ECO:0007669"/>
    <property type="project" value="UniProtKB-KW"/>
</dbReference>
<dbReference type="FunFam" id="3.40.50.12500:FF:000001">
    <property type="entry name" value="Putative hydantoin racemase"/>
    <property type="match status" value="1"/>
</dbReference>
<dbReference type="Gene3D" id="3.40.50.12500">
    <property type="match status" value="1"/>
</dbReference>
<dbReference type="InterPro" id="IPR015942">
    <property type="entry name" value="Asp/Glu/hydantoin_racemase"/>
</dbReference>
<dbReference type="InterPro" id="IPR052186">
    <property type="entry name" value="Hydantoin_racemase-like"/>
</dbReference>
<dbReference type="InterPro" id="IPR053714">
    <property type="entry name" value="Iso_Racemase_Enz_sf"/>
</dbReference>
<dbReference type="PANTHER" id="PTHR28047">
    <property type="entry name" value="PROTEIN DCG1"/>
    <property type="match status" value="1"/>
</dbReference>
<dbReference type="PANTHER" id="PTHR28047:SF5">
    <property type="entry name" value="PROTEIN DCG1"/>
    <property type="match status" value="1"/>
</dbReference>
<dbReference type="Pfam" id="PF01177">
    <property type="entry name" value="Asp_Glu_race"/>
    <property type="match status" value="1"/>
</dbReference>
<organism>
    <name type="scientific">Pseudomonas sp. (strain NS671)</name>
    <dbReference type="NCBI Taxonomy" id="29441"/>
    <lineage>
        <taxon>Bacteria</taxon>
        <taxon>Pseudomonadati</taxon>
        <taxon>Pseudomonadota</taxon>
    </lineage>
</organism>
<comment type="function">
    <text evidence="2 3">Involved in the asymmetric conversion of racemic 5-substituted hydantoins to the corresponding L-amino acids. Catalyzes the racemization via enolization of D- and L-5-monosubstituted hydantoins. Is able to racemize 5-substituted hydantoins having aromatic or aliphatic substituents such as 5-(2-methylthioethyl)hydantoin, 5-isopropylhydantoin, 5-isobutylhydantoin and 5-benzylhydantoin.</text>
</comment>
<comment type="catalytic activity">
    <reaction evidence="2 3">
        <text>a D-5-monosubstituted hydantoin = a L-5-monosubstituted hydantoin</text>
        <dbReference type="Rhea" id="RHEA:46624"/>
        <dbReference type="ChEBI" id="CHEBI:86339"/>
        <dbReference type="ChEBI" id="CHEBI:86340"/>
        <dbReference type="EC" id="5.1.99.5"/>
    </reaction>
</comment>
<comment type="catalytic activity">
    <reaction evidence="2 3">
        <text>D-5-[2-(methylsulfanyl)ethyl]hydantoin = L-5-[2-(methysulfanyl)ethyl]hydantoin</text>
        <dbReference type="Rhea" id="RHEA:83951"/>
        <dbReference type="ChEBI" id="CHEBI:137117"/>
        <dbReference type="ChEBI" id="CHEBI:137150"/>
    </reaction>
</comment>
<comment type="catalytic activity">
    <reaction evidence="2">
        <text>D-5-benzylhydantoin = L-5-benzylhydantoin</text>
        <dbReference type="Rhea" id="RHEA:83991"/>
        <dbReference type="ChEBI" id="CHEBI:176864"/>
        <dbReference type="ChEBI" id="CHEBI:233540"/>
    </reaction>
</comment>
<comment type="catalytic activity">
    <reaction evidence="2">
        <text>D-5-isopropylhydantoin = L-5-isopropylhydantoin</text>
        <dbReference type="Rhea" id="RHEA:84227"/>
        <dbReference type="ChEBI" id="CHEBI:233607"/>
        <dbReference type="ChEBI" id="CHEBI:233608"/>
    </reaction>
</comment>
<comment type="catalytic activity">
    <reaction evidence="2 3">
        <text>D-5-isobutylhydantoin = L-5-isobutylhydantoin</text>
        <dbReference type="Rhea" id="RHEA:84231"/>
        <dbReference type="ChEBI" id="CHEBI:233609"/>
        <dbReference type="ChEBI" id="CHEBI:233610"/>
    </reaction>
</comment>
<comment type="activity regulation">
    <text evidence="3">Strongly inhibited by Cu(2+) and Zn(2+). Slightly stimulated by the addition of Mn(2+) or Co(2+), but also by metal-chelating agents such as EDTA or EGTA, indicating that the enzyme is not a metalloenzyme.</text>
</comment>
<comment type="biophysicochemical properties">
    <kinetics>
        <Vmax evidence="3">79.0 umol/min/mg enzyme with L-5-(2-methylthioethyl)hydantoin as substrate</Vmax>
        <Vmax evidence="3">35.2 umol/min/mg enzyme with D-5-(2-methylthioethyl)hydantoin as substrate</Vmax>
    </kinetics>
    <phDependence>
        <text evidence="3">Optimum pH is 9.5.</text>
    </phDependence>
    <temperatureDependence>
        <text evidence="3">Optimum temperature is 45 degrees Celsius.</text>
    </temperatureDependence>
</comment>
<comment type="subunit">
    <text evidence="3">Homohexamer.</text>
</comment>
<comment type="similarity">
    <text evidence="5">Belongs to the HyuE racemase family.</text>
</comment>
<evidence type="ECO:0000250" key="1">
    <source>
        <dbReference type="UniProtKB" id="Q6TMG4"/>
    </source>
</evidence>
<evidence type="ECO:0000269" key="2">
    <source>
    </source>
</evidence>
<evidence type="ECO:0000269" key="3">
    <source>
    </source>
</evidence>
<evidence type="ECO:0000303" key="4">
    <source>
    </source>
</evidence>
<evidence type="ECO:0000305" key="5"/>
<protein>
    <recommendedName>
        <fullName evidence="4">Hydantoin racemase</fullName>
        <ecNumber evidence="2 3">5.1.99.5</ecNumber>
    </recommendedName>
</protein>
<geneLocation type="plasmid">
    <name>pHN671</name>
</geneLocation>
<name>HYDRA_PSESN</name>
<feature type="chain" id="PRO_0000084120" description="Hydantoin racemase">
    <location>
        <begin position="1"/>
        <end position="249"/>
    </location>
</feature>
<feature type="site" description="Seems to be responsible for recognition and proton retrieval of D-isomers" evidence="1">
    <location>
        <position position="76"/>
    </location>
</feature>
<feature type="site" description="Seems to be responsible for L-isomers recognition and racemization" evidence="1">
    <location>
        <position position="181"/>
    </location>
</feature>
<reference key="1">
    <citation type="journal article" date="1992" name="J. Bacteriol.">
        <title>Identification and sequencing of a gene encoding a hydantoin racemase from the native plasmid of Pseudomonas sp. strain NS671.</title>
        <authorList>
            <person name="Watabe K."/>
            <person name="Ishikawa T."/>
            <person name="Mukohara Y."/>
            <person name="Nakamura H."/>
        </authorList>
    </citation>
    <scope>NUCLEOTIDE SEQUENCE [GENOMIC DNA]</scope>
    <scope>FUNCTION</scope>
    <scope>CATALYTIC ACTIVITY</scope>
    <scope>SUBSTRATE SPECIFICITY</scope>
    <scope>NOMENCLATURE</scope>
    <source>
        <strain>NS671</strain>
    </source>
</reference>
<reference key="2">
    <citation type="journal article" date="1992" name="J. Bacteriol.">
        <title>Purification and characterization of the hydantoin racemase of Pseudomonas sp. strain NS671 expressed in Escherichia coli.</title>
        <authorList>
            <person name="Watabe K."/>
            <person name="Ishikawa T."/>
            <person name="Mukohara Y."/>
            <person name="Nakamura H."/>
        </authorList>
    </citation>
    <scope>PROTEIN SEQUENCE OF 1-10</scope>
    <scope>FUNCTION</scope>
    <scope>CATALYTIC ACTIVITY</scope>
    <scope>BIOPHYSICOCHEMICAL PROPERTIES</scope>
    <scope>ACTIVITY REGULATION</scope>
    <scope>SUBUNIT</scope>
    <source>
        <strain>NS671</strain>
    </source>
</reference>
<sequence>MKIKVINPNTTLAMTKGIEHAAKSAARSDTQIVAVSPKMGPASIESYYDEYLSIPGVIEEIKKGEEEGVDAFVIACWGDPGLHAAREVTDKPVVGIAESSVYLASMLAARFSVVTVLPRIKTMLEDLVDSYGMQKRVLNIRTTPMGVLDFERDPEAGIEMLRQEGKRAVEEDNAEAILLGCAGMAEFADSLEKELGVPVIDGVVAGVKFAETIVDLGKKTSKLKTYKYPEKKEYVGALENFGRNQTTTK</sequence>
<keyword id="KW-0028">Amino-acid biosynthesis</keyword>
<keyword id="KW-0903">Direct protein sequencing</keyword>
<keyword id="KW-0413">Isomerase</keyword>
<keyword id="KW-0614">Plasmid</keyword>
<gene>
    <name evidence="4" type="primary">hyuE</name>
</gene>